<comment type="function">
    <text evidence="1 9">Involved in primary cilium formation (PubMed:28530676). Probably acts as a transition zone protein required for localization of PKD1/PC1 and PKD2/PC2 to the ciliary membrane (By similarity).</text>
</comment>
<comment type="subunit">
    <text evidence="1">Interacts with SEPTIN2.</text>
</comment>
<comment type="subcellular location">
    <subcellularLocation>
        <location evidence="1">Cytoplasm</location>
        <location evidence="1">Cytoskeleton</location>
        <location evidence="1">Cilium basal body</location>
    </subcellularLocation>
    <subcellularLocation>
        <location evidence="1">Cytoplasm</location>
        <location evidence="1">Cytoskeleton</location>
        <location evidence="1">Microtubule organizing center</location>
        <location evidence="1">Centrosome</location>
        <location evidence="1">Centriole</location>
    </subcellularLocation>
    <text evidence="1">Localizes to centrioles and to the distal ends of basal bodies.</text>
</comment>
<comment type="alternative products">
    <event type="alternative splicing"/>
    <isoform>
        <id>Q499E4-1</id>
        <name>1</name>
        <sequence type="displayed"/>
    </isoform>
    <isoform>
        <id>Q499E4-2</id>
        <name>2</name>
        <sequence type="described" ref="VSP_033160"/>
    </isoform>
</comment>
<comment type="similarity">
    <text evidence="8">Belongs to the DZIP C2H2-type zinc-finger protein family.</text>
</comment>
<keyword id="KW-0025">Alternative splicing</keyword>
<keyword id="KW-0966">Cell projection</keyword>
<keyword id="KW-0969">Cilium</keyword>
<keyword id="KW-0175">Coiled coil</keyword>
<keyword id="KW-0963">Cytoplasm</keyword>
<keyword id="KW-0206">Cytoskeleton</keyword>
<keyword id="KW-0479">Metal-binding</keyword>
<keyword id="KW-0597">Phosphoprotein</keyword>
<keyword id="KW-1185">Reference proteome</keyword>
<keyword id="KW-0862">Zinc</keyword>
<keyword id="KW-0863">Zinc-finger</keyword>
<name>DZI1L_MOUSE</name>
<organism>
    <name type="scientific">Mus musculus</name>
    <name type="common">Mouse</name>
    <dbReference type="NCBI Taxonomy" id="10090"/>
    <lineage>
        <taxon>Eukaryota</taxon>
        <taxon>Metazoa</taxon>
        <taxon>Chordata</taxon>
        <taxon>Craniata</taxon>
        <taxon>Vertebrata</taxon>
        <taxon>Euteleostomi</taxon>
        <taxon>Mammalia</taxon>
        <taxon>Eutheria</taxon>
        <taxon>Euarchontoglires</taxon>
        <taxon>Glires</taxon>
        <taxon>Rodentia</taxon>
        <taxon>Myomorpha</taxon>
        <taxon>Muroidea</taxon>
        <taxon>Muridae</taxon>
        <taxon>Murinae</taxon>
        <taxon>Mus</taxon>
        <taxon>Mus</taxon>
    </lineage>
</organism>
<feature type="chain" id="PRO_0000331307" description="Cilium assembly protein DZIP1L">
    <location>
        <begin position="1"/>
        <end position="774"/>
    </location>
</feature>
<feature type="zinc finger region" description="C2H2-type" evidence="3">
    <location>
        <begin position="166"/>
        <end position="189"/>
    </location>
</feature>
<feature type="region of interest" description="Disordered" evidence="4">
    <location>
        <begin position="415"/>
        <end position="435"/>
    </location>
</feature>
<feature type="region of interest" description="Disordered" evidence="4">
    <location>
        <begin position="515"/>
        <end position="674"/>
    </location>
</feature>
<feature type="region of interest" description="Disordered" evidence="4">
    <location>
        <begin position="686"/>
        <end position="774"/>
    </location>
</feature>
<feature type="coiled-coil region" evidence="2">
    <location>
        <begin position="204"/>
        <end position="450"/>
    </location>
</feature>
<feature type="compositionally biased region" description="Acidic residues" evidence="4">
    <location>
        <begin position="421"/>
        <end position="433"/>
    </location>
</feature>
<feature type="compositionally biased region" description="Basic and acidic residues" evidence="4">
    <location>
        <begin position="515"/>
        <end position="526"/>
    </location>
</feature>
<feature type="compositionally biased region" description="Low complexity" evidence="4">
    <location>
        <begin position="597"/>
        <end position="616"/>
    </location>
</feature>
<feature type="modified residue" description="Phosphoserine" evidence="11">
    <location>
        <position position="425"/>
    </location>
</feature>
<feature type="modified residue" description="Phosphoserine" evidence="11">
    <location>
        <position position="426"/>
    </location>
</feature>
<feature type="splice variant" id="VSP_033160" description="In isoform 2." evidence="6">
    <location>
        <position position="610"/>
    </location>
</feature>
<feature type="mutagenesis site" description="In wpy; widespread embryonic dysmorphologies, including highly penetrant polydactyly of all four limbs as well as craniofacial defects. Mice develop cystic kidney disease." evidence="5">
    <location>
        <begin position="375"/>
        <end position="774"/>
    </location>
</feature>
<feature type="sequence conflict" description="In Ref. 1; BAB28052." evidence="8" ref="1">
    <original>R</original>
    <variation>H</variation>
    <location>
        <position position="45"/>
    </location>
</feature>
<feature type="sequence conflict" description="In Ref. 1; BAC26121." evidence="8" ref="1">
    <original>I</original>
    <variation>V</variation>
    <location>
        <position position="93"/>
    </location>
</feature>
<protein>
    <recommendedName>
        <fullName evidence="9">Cilium assembly protein DZIP1L</fullName>
    </recommendedName>
    <alternativeName>
        <fullName evidence="10">DAZ-interacting zinc finger protein 1-like</fullName>
    </alternativeName>
    <alternativeName>
        <fullName evidence="7">Protein warpy</fullName>
    </alternativeName>
</protein>
<reference key="1">
    <citation type="journal article" date="2005" name="Science">
        <title>The transcriptional landscape of the mammalian genome.</title>
        <authorList>
            <person name="Carninci P."/>
            <person name="Kasukawa T."/>
            <person name="Katayama S."/>
            <person name="Gough J."/>
            <person name="Frith M.C."/>
            <person name="Maeda N."/>
            <person name="Oyama R."/>
            <person name="Ravasi T."/>
            <person name="Lenhard B."/>
            <person name="Wells C."/>
            <person name="Kodzius R."/>
            <person name="Shimokawa K."/>
            <person name="Bajic V.B."/>
            <person name="Brenner S.E."/>
            <person name="Batalov S."/>
            <person name="Forrest A.R."/>
            <person name="Zavolan M."/>
            <person name="Davis M.J."/>
            <person name="Wilming L.G."/>
            <person name="Aidinis V."/>
            <person name="Allen J.E."/>
            <person name="Ambesi-Impiombato A."/>
            <person name="Apweiler R."/>
            <person name="Aturaliya R.N."/>
            <person name="Bailey T.L."/>
            <person name="Bansal M."/>
            <person name="Baxter L."/>
            <person name="Beisel K.W."/>
            <person name="Bersano T."/>
            <person name="Bono H."/>
            <person name="Chalk A.M."/>
            <person name="Chiu K.P."/>
            <person name="Choudhary V."/>
            <person name="Christoffels A."/>
            <person name="Clutterbuck D.R."/>
            <person name="Crowe M.L."/>
            <person name="Dalla E."/>
            <person name="Dalrymple B.P."/>
            <person name="de Bono B."/>
            <person name="Della Gatta G."/>
            <person name="di Bernardo D."/>
            <person name="Down T."/>
            <person name="Engstrom P."/>
            <person name="Fagiolini M."/>
            <person name="Faulkner G."/>
            <person name="Fletcher C.F."/>
            <person name="Fukushima T."/>
            <person name="Furuno M."/>
            <person name="Futaki S."/>
            <person name="Gariboldi M."/>
            <person name="Georgii-Hemming P."/>
            <person name="Gingeras T.R."/>
            <person name="Gojobori T."/>
            <person name="Green R.E."/>
            <person name="Gustincich S."/>
            <person name="Harbers M."/>
            <person name="Hayashi Y."/>
            <person name="Hensch T.K."/>
            <person name="Hirokawa N."/>
            <person name="Hill D."/>
            <person name="Huminiecki L."/>
            <person name="Iacono M."/>
            <person name="Ikeo K."/>
            <person name="Iwama A."/>
            <person name="Ishikawa T."/>
            <person name="Jakt M."/>
            <person name="Kanapin A."/>
            <person name="Katoh M."/>
            <person name="Kawasawa Y."/>
            <person name="Kelso J."/>
            <person name="Kitamura H."/>
            <person name="Kitano H."/>
            <person name="Kollias G."/>
            <person name="Krishnan S.P."/>
            <person name="Kruger A."/>
            <person name="Kummerfeld S.K."/>
            <person name="Kurochkin I.V."/>
            <person name="Lareau L.F."/>
            <person name="Lazarevic D."/>
            <person name="Lipovich L."/>
            <person name="Liu J."/>
            <person name="Liuni S."/>
            <person name="McWilliam S."/>
            <person name="Madan Babu M."/>
            <person name="Madera M."/>
            <person name="Marchionni L."/>
            <person name="Matsuda H."/>
            <person name="Matsuzawa S."/>
            <person name="Miki H."/>
            <person name="Mignone F."/>
            <person name="Miyake S."/>
            <person name="Morris K."/>
            <person name="Mottagui-Tabar S."/>
            <person name="Mulder N."/>
            <person name="Nakano N."/>
            <person name="Nakauchi H."/>
            <person name="Ng P."/>
            <person name="Nilsson R."/>
            <person name="Nishiguchi S."/>
            <person name="Nishikawa S."/>
            <person name="Nori F."/>
            <person name="Ohara O."/>
            <person name="Okazaki Y."/>
            <person name="Orlando V."/>
            <person name="Pang K.C."/>
            <person name="Pavan W.J."/>
            <person name="Pavesi G."/>
            <person name="Pesole G."/>
            <person name="Petrovsky N."/>
            <person name="Piazza S."/>
            <person name="Reed J."/>
            <person name="Reid J.F."/>
            <person name="Ring B.Z."/>
            <person name="Ringwald M."/>
            <person name="Rost B."/>
            <person name="Ruan Y."/>
            <person name="Salzberg S.L."/>
            <person name="Sandelin A."/>
            <person name="Schneider C."/>
            <person name="Schoenbach C."/>
            <person name="Sekiguchi K."/>
            <person name="Semple C.A."/>
            <person name="Seno S."/>
            <person name="Sessa L."/>
            <person name="Sheng Y."/>
            <person name="Shibata Y."/>
            <person name="Shimada H."/>
            <person name="Shimada K."/>
            <person name="Silva D."/>
            <person name="Sinclair B."/>
            <person name="Sperling S."/>
            <person name="Stupka E."/>
            <person name="Sugiura K."/>
            <person name="Sultana R."/>
            <person name="Takenaka Y."/>
            <person name="Taki K."/>
            <person name="Tammoja K."/>
            <person name="Tan S.L."/>
            <person name="Tang S."/>
            <person name="Taylor M.S."/>
            <person name="Tegner J."/>
            <person name="Teichmann S.A."/>
            <person name="Ueda H.R."/>
            <person name="van Nimwegen E."/>
            <person name="Verardo R."/>
            <person name="Wei C.L."/>
            <person name="Yagi K."/>
            <person name="Yamanishi H."/>
            <person name="Zabarovsky E."/>
            <person name="Zhu S."/>
            <person name="Zimmer A."/>
            <person name="Hide W."/>
            <person name="Bult C."/>
            <person name="Grimmond S.M."/>
            <person name="Teasdale R.D."/>
            <person name="Liu E.T."/>
            <person name="Brusic V."/>
            <person name="Quackenbush J."/>
            <person name="Wahlestedt C."/>
            <person name="Mattick J.S."/>
            <person name="Hume D.A."/>
            <person name="Kai C."/>
            <person name="Sasaki D."/>
            <person name="Tomaru Y."/>
            <person name="Fukuda S."/>
            <person name="Kanamori-Katayama M."/>
            <person name="Suzuki M."/>
            <person name="Aoki J."/>
            <person name="Arakawa T."/>
            <person name="Iida J."/>
            <person name="Imamura K."/>
            <person name="Itoh M."/>
            <person name="Kato T."/>
            <person name="Kawaji H."/>
            <person name="Kawagashira N."/>
            <person name="Kawashima T."/>
            <person name="Kojima M."/>
            <person name="Kondo S."/>
            <person name="Konno H."/>
            <person name="Nakano K."/>
            <person name="Ninomiya N."/>
            <person name="Nishio T."/>
            <person name="Okada M."/>
            <person name="Plessy C."/>
            <person name="Shibata K."/>
            <person name="Shiraki T."/>
            <person name="Suzuki S."/>
            <person name="Tagami M."/>
            <person name="Waki K."/>
            <person name="Watahiki A."/>
            <person name="Okamura-Oho Y."/>
            <person name="Suzuki H."/>
            <person name="Kawai J."/>
            <person name="Hayashizaki Y."/>
        </authorList>
    </citation>
    <scope>NUCLEOTIDE SEQUENCE [LARGE SCALE MRNA] (ISOFORMS 1 AND 2)</scope>
    <source>
        <strain>C57BL/6J</strain>
        <tissue>Diencephalon</tissue>
        <tissue>Embryo</tissue>
        <tissue>Skin</tissue>
    </source>
</reference>
<reference key="2">
    <citation type="journal article" date="2004" name="Genome Res.">
        <title>The status, quality, and expansion of the NIH full-length cDNA project: the Mammalian Gene Collection (MGC).</title>
        <authorList>
            <consortium name="The MGC Project Team"/>
        </authorList>
    </citation>
    <scope>NUCLEOTIDE SEQUENCE [LARGE SCALE MRNA]</scope>
    <source>
        <strain>CD-1</strain>
        <tissue>Neural stem cell</tissue>
    </source>
</reference>
<reference key="3">
    <citation type="journal article" date="2010" name="Cell">
        <title>A tissue-specific atlas of mouse protein phosphorylation and expression.</title>
        <authorList>
            <person name="Huttlin E.L."/>
            <person name="Jedrychowski M.P."/>
            <person name="Elias J.E."/>
            <person name="Goswami T."/>
            <person name="Rad R."/>
            <person name="Beausoleil S.A."/>
            <person name="Villen J."/>
            <person name="Haas W."/>
            <person name="Sowa M.E."/>
            <person name="Gygi S.P."/>
        </authorList>
    </citation>
    <scope>PHOSPHORYLATION [LARGE SCALE ANALYSIS] AT SER-425 AND SER-426</scope>
    <scope>IDENTIFICATION BY MASS SPECTROMETRY [LARGE SCALE ANALYSIS]</scope>
    <source>
        <tissue>Kidney</tissue>
    </source>
</reference>
<reference key="4">
    <citation type="journal article" date="2017" name="Nat. Genet.">
        <title>Mutations in DZIP1L, which encodes a ciliary-transition-zone protein, cause autosomal recessive polycystic kidney disease.</title>
        <authorList>
            <person name="Lu H."/>
            <person name="Galeano M.C.R."/>
            <person name="Ott E."/>
            <person name="Kaeslin G."/>
            <person name="Kausalya P.J."/>
            <person name="Kramer C."/>
            <person name="Ortiz-Bruechle N."/>
            <person name="Hilger N."/>
            <person name="Metzis V."/>
            <person name="Hiersche M."/>
            <person name="Tay S.Y."/>
            <person name="Tunningley R."/>
            <person name="Vij S."/>
            <person name="Courtney A.D."/>
            <person name="Whittle B."/>
            <person name="Wuehl E."/>
            <person name="Vester U."/>
            <person name="Hartleben B."/>
            <person name="Neuber S."/>
            <person name="Frank V."/>
            <person name="Little M.H."/>
            <person name="Epting D."/>
            <person name="Papathanasiou P."/>
            <person name="Perkins A.C."/>
            <person name="Wright G.D."/>
            <person name="Hunziker W."/>
            <person name="Gee H.Y."/>
            <person name="Otto E.A."/>
            <person name="Zerres K."/>
            <person name="Hildebrandt F."/>
            <person name="Roy S."/>
            <person name="Wicking C."/>
            <person name="Bergmann C."/>
        </authorList>
    </citation>
    <scope>FUNCTION</scope>
    <scope>MUTAGENESIS OF 375-GLN--TRP-774</scope>
</reference>
<dbReference type="EMBL" id="AK012132">
    <property type="protein sequence ID" value="BAB28052.1"/>
    <property type="molecule type" value="mRNA"/>
</dbReference>
<dbReference type="EMBL" id="AK028787">
    <property type="protein sequence ID" value="BAC26121.1"/>
    <property type="molecule type" value="mRNA"/>
</dbReference>
<dbReference type="EMBL" id="AK034503">
    <property type="protein sequence ID" value="BAC28732.1"/>
    <property type="molecule type" value="mRNA"/>
</dbReference>
<dbReference type="EMBL" id="BC099950">
    <property type="protein sequence ID" value="AAH99950.1"/>
    <property type="molecule type" value="mRNA"/>
</dbReference>
<dbReference type="CCDS" id="CCDS23436.1">
    <molecule id="Q499E4-1"/>
</dbReference>
<dbReference type="CCDS" id="CCDS81060.1">
    <molecule id="Q499E4-2"/>
</dbReference>
<dbReference type="RefSeq" id="NP_001298071.1">
    <molecule id="Q499E4-2"/>
    <property type="nucleotide sequence ID" value="NM_001311142.1"/>
</dbReference>
<dbReference type="RefSeq" id="NP_082534.2">
    <molecule id="Q499E4-1"/>
    <property type="nucleotide sequence ID" value="NM_028258.4"/>
</dbReference>
<dbReference type="RefSeq" id="XP_006511537.1">
    <molecule id="Q499E4-1"/>
    <property type="nucleotide sequence ID" value="XM_006511474.4"/>
</dbReference>
<dbReference type="RefSeq" id="XP_006511538.1">
    <molecule id="Q499E4-1"/>
    <property type="nucleotide sequence ID" value="XM_006511475.5"/>
</dbReference>
<dbReference type="RefSeq" id="XP_006511539.1">
    <molecule id="Q499E4-1"/>
    <property type="nucleotide sequence ID" value="XM_006511476.5"/>
</dbReference>
<dbReference type="RefSeq" id="XP_030100491.1">
    <molecule id="Q499E4-2"/>
    <property type="nucleotide sequence ID" value="XM_030244631.2"/>
</dbReference>
<dbReference type="RefSeq" id="XP_030100492.1">
    <molecule id="Q499E4-2"/>
    <property type="nucleotide sequence ID" value="XM_030244632.2"/>
</dbReference>
<dbReference type="RefSeq" id="XP_030100493.1">
    <molecule id="Q499E4-2"/>
    <property type="nucleotide sequence ID" value="XM_030244633.2"/>
</dbReference>
<dbReference type="SMR" id="Q499E4"/>
<dbReference type="BioGRID" id="215407">
    <property type="interactions" value="1"/>
</dbReference>
<dbReference type="FunCoup" id="Q499E4">
    <property type="interactions" value="69"/>
</dbReference>
<dbReference type="STRING" id="10090.ENSMUSP00000108506"/>
<dbReference type="iPTMnet" id="Q499E4"/>
<dbReference type="PhosphoSitePlus" id="Q499E4"/>
<dbReference type="PaxDb" id="10090-ENSMUSP00000108506"/>
<dbReference type="ProteomicsDB" id="279595">
    <molecule id="Q499E4-1"/>
</dbReference>
<dbReference type="ProteomicsDB" id="279596">
    <molecule id="Q499E4-2"/>
</dbReference>
<dbReference type="Antibodypedia" id="33422">
    <property type="antibodies" value="14 antibodies from 9 providers"/>
</dbReference>
<dbReference type="DNASU" id="72507"/>
<dbReference type="Ensembl" id="ENSMUST00000078367.12">
    <molecule id="Q499E4-1"/>
    <property type="protein sequence ID" value="ENSMUSP00000077475.6"/>
    <property type="gene ID" value="ENSMUSG00000037784.15"/>
</dbReference>
<dbReference type="Ensembl" id="ENSMUST00000112884.2">
    <molecule id="Q499E4-2"/>
    <property type="protein sequence ID" value="ENSMUSP00000108505.2"/>
    <property type="gene ID" value="ENSMUSG00000037784.15"/>
</dbReference>
<dbReference type="Ensembl" id="ENSMUST00000112885.9">
    <molecule id="Q499E4-1"/>
    <property type="protein sequence ID" value="ENSMUSP00000108506.3"/>
    <property type="gene ID" value="ENSMUSG00000037784.15"/>
</dbReference>
<dbReference type="Ensembl" id="ENSMUST00000112886.9">
    <molecule id="Q499E4-2"/>
    <property type="protein sequence ID" value="ENSMUSP00000108507.3"/>
    <property type="gene ID" value="ENSMUSG00000037784.15"/>
</dbReference>
<dbReference type="GeneID" id="72507"/>
<dbReference type="KEGG" id="mmu:72507"/>
<dbReference type="UCSC" id="uc009rem.1">
    <molecule id="Q499E4-1"/>
    <property type="organism name" value="mouse"/>
</dbReference>
<dbReference type="UCSC" id="uc009reo.1">
    <molecule id="Q499E4-2"/>
    <property type="organism name" value="mouse"/>
</dbReference>
<dbReference type="AGR" id="MGI:1919757"/>
<dbReference type="CTD" id="199221"/>
<dbReference type="MGI" id="MGI:1919757">
    <property type="gene designation" value="Dzip1l"/>
</dbReference>
<dbReference type="VEuPathDB" id="HostDB:ENSMUSG00000037784"/>
<dbReference type="eggNOG" id="ENOG502QRAI">
    <property type="taxonomic scope" value="Eukaryota"/>
</dbReference>
<dbReference type="GeneTree" id="ENSGT00940000160898"/>
<dbReference type="HOGENOM" id="CLU_018051_0_1_1"/>
<dbReference type="InParanoid" id="Q499E4"/>
<dbReference type="OMA" id="FFMSNAG"/>
<dbReference type="OrthoDB" id="515971at2759"/>
<dbReference type="PhylomeDB" id="Q499E4"/>
<dbReference type="TreeFam" id="TF330044"/>
<dbReference type="BioGRID-ORCS" id="72507">
    <property type="hits" value="5 hits in 77 CRISPR screens"/>
</dbReference>
<dbReference type="PRO" id="PR:Q499E4"/>
<dbReference type="Proteomes" id="UP000000589">
    <property type="component" value="Chromosome 9"/>
</dbReference>
<dbReference type="RNAct" id="Q499E4">
    <property type="molecule type" value="protein"/>
</dbReference>
<dbReference type="Bgee" id="ENSMUSG00000037784">
    <property type="expression patterns" value="Expressed in olfactory epithelium and 180 other cell types or tissues"/>
</dbReference>
<dbReference type="ExpressionAtlas" id="Q499E4">
    <property type="expression patterns" value="baseline and differential"/>
</dbReference>
<dbReference type="GO" id="GO:0005930">
    <property type="term" value="C:axoneme"/>
    <property type="evidence" value="ECO:0000314"/>
    <property type="project" value="MGI"/>
</dbReference>
<dbReference type="GO" id="GO:0005814">
    <property type="term" value="C:centriole"/>
    <property type="evidence" value="ECO:0000314"/>
    <property type="project" value="MGI"/>
</dbReference>
<dbReference type="GO" id="GO:0036064">
    <property type="term" value="C:ciliary basal body"/>
    <property type="evidence" value="ECO:0000314"/>
    <property type="project" value="MGI"/>
</dbReference>
<dbReference type="GO" id="GO:0005829">
    <property type="term" value="C:cytosol"/>
    <property type="evidence" value="ECO:0007669"/>
    <property type="project" value="Ensembl"/>
</dbReference>
<dbReference type="GO" id="GO:0045171">
    <property type="term" value="C:intercellular bridge"/>
    <property type="evidence" value="ECO:0007669"/>
    <property type="project" value="Ensembl"/>
</dbReference>
<dbReference type="GO" id="GO:0072686">
    <property type="term" value="C:mitotic spindle"/>
    <property type="evidence" value="ECO:0007669"/>
    <property type="project" value="Ensembl"/>
</dbReference>
<dbReference type="GO" id="GO:0005654">
    <property type="term" value="C:nucleoplasm"/>
    <property type="evidence" value="ECO:0007669"/>
    <property type="project" value="Ensembl"/>
</dbReference>
<dbReference type="GO" id="GO:0008270">
    <property type="term" value="F:zinc ion binding"/>
    <property type="evidence" value="ECO:0007669"/>
    <property type="project" value="UniProtKB-KW"/>
</dbReference>
<dbReference type="GO" id="GO:1905349">
    <property type="term" value="P:ciliary transition zone assembly"/>
    <property type="evidence" value="ECO:0000315"/>
    <property type="project" value="MGI"/>
</dbReference>
<dbReference type="GO" id="GO:0060271">
    <property type="term" value="P:cilium assembly"/>
    <property type="evidence" value="ECO:0000315"/>
    <property type="project" value="MGI"/>
</dbReference>
<dbReference type="GO" id="GO:0033504">
    <property type="term" value="P:floor plate development"/>
    <property type="evidence" value="ECO:0000316"/>
    <property type="project" value="MGI"/>
</dbReference>
<dbReference type="GO" id="GO:0021532">
    <property type="term" value="P:neural tube patterning"/>
    <property type="evidence" value="ECO:0000316"/>
    <property type="project" value="MGI"/>
</dbReference>
<dbReference type="GO" id="GO:0061512">
    <property type="term" value="P:protein localization to cilium"/>
    <property type="evidence" value="ECO:0000315"/>
    <property type="project" value="MGI"/>
</dbReference>
<dbReference type="GO" id="GO:0033365">
    <property type="term" value="P:protein localization to organelle"/>
    <property type="evidence" value="ECO:0000315"/>
    <property type="project" value="MGI"/>
</dbReference>
<dbReference type="GO" id="GO:0032880">
    <property type="term" value="P:regulation of protein localization"/>
    <property type="evidence" value="ECO:0000250"/>
    <property type="project" value="UniProtKB"/>
</dbReference>
<dbReference type="GO" id="GO:0007224">
    <property type="term" value="P:smoothened signaling pathway"/>
    <property type="evidence" value="ECO:0000315"/>
    <property type="project" value="MGI"/>
</dbReference>
<dbReference type="InterPro" id="IPR032714">
    <property type="entry name" value="DZIP1_N"/>
</dbReference>
<dbReference type="InterPro" id="IPR051241">
    <property type="entry name" value="DZIP_RILPL"/>
</dbReference>
<dbReference type="InterPro" id="IPR013087">
    <property type="entry name" value="Znf_C2H2_type"/>
</dbReference>
<dbReference type="PANTHER" id="PTHR21502:SF8">
    <property type="entry name" value="CILIUM ASSEMBLY PROTEIN DZIP1L"/>
    <property type="match status" value="1"/>
</dbReference>
<dbReference type="PANTHER" id="PTHR21502">
    <property type="entry name" value="ZINC FINGER PROTEIN DZIP1"/>
    <property type="match status" value="1"/>
</dbReference>
<dbReference type="Pfam" id="PF13815">
    <property type="entry name" value="Dzip-like_N"/>
    <property type="match status" value="1"/>
</dbReference>
<dbReference type="PROSITE" id="PS00028">
    <property type="entry name" value="ZINC_FINGER_C2H2_1"/>
    <property type="match status" value="1"/>
</dbReference>
<dbReference type="PROSITE" id="PS50157">
    <property type="entry name" value="ZINC_FINGER_C2H2_2"/>
    <property type="match status" value="1"/>
</dbReference>
<sequence>MQYPAATAEGLSGPLSGAYTLPAFKFQPRRESIDWRRISAVDVDRVARELDVATLQENIAGVTFCNLDGEVCNHCRQPVDPVLLKVLRLAQLIIEYLLHCQDCLSASVAQLEARLQASLGQQQRGQQELGRQADELKGVREESRRRRKMISTLQQLLLQTSAHSYHTCHLCDKTFMNATFLRGHIQRRHAGMADVGKQKQEQPLGEVLEELRAKLKWTQGELEAQREAERQRQVQELEMARQREMEAKKKFDEWKEKERSKLYGEIDKLKQLFWDEFKTVANQNSTLEEKLKALQSYSMTESHLGSLRDEESEERLKHAQEVQALQEKMEVQKTEWKRKMKALHEERAAERRQLQEENERLHVSLSQDQKKAAAQSQRHINALRAQLQEQARLIESQEETIQTLSLRKVEEVQEMPKAVATEEDSSEEELEASLEERQEQRKVLAALRKNPTWLKQFRPILEDTLEEKLEGLGIKRDTKGISAQTVRRLEPLLRTQREQIARSFREFPSLREKLNKEVSSRVKQRWESTTQPDGQPPVKSQRVTLATREVRPKTRTLTVALPSKPAEPSTPTLQGHSSHGPGLTQVSTPIPRPRVHGPSSTPVSPGSGLSSTPPFSSEEEPEGDVVQRVSLQPPKVLPRSAAKPEDNWGWSDSETSEESAQPPGKGSGGLASSGTLVQSIVKNLEKQLETPAKKPSGGVNMFLRPNAALQRASTPARKSQLSEDESDVEISSLEDLSQDLGQKGKPKPLSHSKLPEKFDVSPWSSGSRPRIPGW</sequence>
<accession>Q499E4</accession>
<accession>Q8BZI8</accession>
<accession>Q8C182</accession>
<accession>Q9CSR1</accession>
<proteinExistence type="evidence at protein level"/>
<gene>
    <name evidence="10" type="primary">Dzip1l</name>
    <name evidence="7" type="synonym">wpy</name>
</gene>
<evidence type="ECO:0000250" key="1">
    <source>
        <dbReference type="UniProtKB" id="Q8IYY4"/>
    </source>
</evidence>
<evidence type="ECO:0000255" key="2"/>
<evidence type="ECO:0000255" key="3">
    <source>
        <dbReference type="PROSITE-ProRule" id="PRU00042"/>
    </source>
</evidence>
<evidence type="ECO:0000256" key="4">
    <source>
        <dbReference type="SAM" id="MobiDB-lite"/>
    </source>
</evidence>
<evidence type="ECO:0000269" key="5">
    <source>
    </source>
</evidence>
<evidence type="ECO:0000303" key="6">
    <source>
    </source>
</evidence>
<evidence type="ECO:0000303" key="7">
    <source>
    </source>
</evidence>
<evidence type="ECO:0000305" key="8"/>
<evidence type="ECO:0000305" key="9">
    <source>
    </source>
</evidence>
<evidence type="ECO:0000312" key="10">
    <source>
        <dbReference type="MGI" id="MGI:1919757"/>
    </source>
</evidence>
<evidence type="ECO:0007744" key="11">
    <source>
    </source>
</evidence>